<name>NEPA_PAENI</name>
<gene>
    <name type="primary">nepA</name>
    <name type="ORF">ORF116</name>
    <name type="ORF">ORF61</name>
</gene>
<keyword id="KW-1003">Cell membrane</keyword>
<keyword id="KW-0472">Membrane</keyword>
<keyword id="KW-0614">Plasmid</keyword>
<keyword id="KW-0812">Transmembrane</keyword>
<keyword id="KW-1133">Transmembrane helix</keyword>
<keyword id="KW-0813">Transport</keyword>
<accession>Q8GAI5</accession>
<organism>
    <name type="scientific">Paenarthrobacter nicotinovorans</name>
    <name type="common">Arthrobacter nicotinovorans</name>
    <dbReference type="NCBI Taxonomy" id="29320"/>
    <lineage>
        <taxon>Bacteria</taxon>
        <taxon>Bacillati</taxon>
        <taxon>Actinomycetota</taxon>
        <taxon>Actinomycetes</taxon>
        <taxon>Micrococcales</taxon>
        <taxon>Micrococcaceae</taxon>
        <taxon>Paenarthrobacter</taxon>
    </lineage>
</organism>
<sequence>MQTRYGRRALTIWPLLLLAIAAEVAATSLLPQTNGFRKLKPTVAVACLYTVAFALLAQILKFTDIGIAYALWAGLGTASVAVIGVLFRNERFSWKHAIGLALVVTGVVTLNLQAGQ</sequence>
<geneLocation type="plasmid">
    <name>pAO1</name>
</geneLocation>
<protein>
    <recommendedName>
        <fullName>Nicotine metabolites export pump subunit NepA</fullName>
    </recommendedName>
    <alternativeName>
        <fullName>SMR efflux pump subunit NepA</fullName>
    </alternativeName>
</protein>
<reference key="1">
    <citation type="journal article" date="2003" name="J. Bacteriol.">
        <title>Sequence of the 165-kilobase catabolic plasmid pAO1 from Arthrobacter nicotinovorans and identification of a pAO1-dependent nicotine uptake system.</title>
        <authorList>
            <person name="Igloi G.L."/>
            <person name="Brandsch R."/>
        </authorList>
    </citation>
    <scope>NUCLEOTIDE SEQUENCE [GENOMIC DNA]</scope>
    <source>
        <strain>ATCC 49919 / DSM 420 / JCM 3874 / KCTC 9902 / LMG 16253 / NBRC 15511</strain>
        <plasmid>pAO1</plasmid>
    </source>
</reference>
<reference key="2">
    <citation type="journal article" date="2007" name="Microbiology">
        <title>A two-component small multidrug resistance pump functions as a metabolic valve during nicotine catabolism by Arthrobacter nicotinovorans.</title>
        <authorList>
            <person name="Ganas P."/>
            <person name="Mihasan M."/>
            <person name="Igloi G.L."/>
            <person name="Brandsch R."/>
        </authorList>
    </citation>
    <scope>FUNCTION</scope>
    <scope>GENE NAME</scope>
    <scope>SUBUNIT</scope>
    <scope>INDUCTION</scope>
    <scope>OPERON STRUCTURE</scope>
    <source>
        <strain>ATCC 49919 / DSM 420 / JCM 3874 / KCTC 9902 / LMG 16253 / NBRC 15511</strain>
        <plasmid>pAO1</plasmid>
    </source>
</reference>
<dbReference type="EMBL" id="AJ507836">
    <property type="protein sequence ID" value="CAD47919.1"/>
    <property type="molecule type" value="Genomic_DNA"/>
</dbReference>
<dbReference type="RefSeq" id="WP_016359430.1">
    <property type="nucleotide sequence ID" value="NZ_JAGINZ010000002.1"/>
</dbReference>
<dbReference type="RefSeq" id="YP_007988745.1">
    <property type="nucleotide sequence ID" value="NC_021229.1"/>
</dbReference>
<dbReference type="SMR" id="Q8GAI5"/>
<dbReference type="TCDB" id="2.A.7.1.8">
    <property type="family name" value="the drug/metabolite transporter (dmt) superfamily"/>
</dbReference>
<dbReference type="GO" id="GO:0005886">
    <property type="term" value="C:plasma membrane"/>
    <property type="evidence" value="ECO:0007669"/>
    <property type="project" value="UniProtKB-SubCell"/>
</dbReference>
<dbReference type="GO" id="GO:0022857">
    <property type="term" value="F:transmembrane transporter activity"/>
    <property type="evidence" value="ECO:0007669"/>
    <property type="project" value="InterPro"/>
</dbReference>
<dbReference type="FunFam" id="1.10.3730.20:FF:000001">
    <property type="entry name" value="Quaternary ammonium compound resistance transporter SugE"/>
    <property type="match status" value="1"/>
</dbReference>
<dbReference type="Gene3D" id="1.10.3730.20">
    <property type="match status" value="1"/>
</dbReference>
<dbReference type="InterPro" id="IPR000390">
    <property type="entry name" value="Small_drug/metabolite_transptr"/>
</dbReference>
<dbReference type="InterPro" id="IPR045324">
    <property type="entry name" value="Small_multidrug_res"/>
</dbReference>
<dbReference type="PANTHER" id="PTHR30561:SF1">
    <property type="entry name" value="MULTIDRUG TRANSPORTER EMRE"/>
    <property type="match status" value="1"/>
</dbReference>
<dbReference type="PANTHER" id="PTHR30561">
    <property type="entry name" value="SMR FAMILY PROTON-DEPENDENT DRUG EFFLUX TRANSPORTER SUGE"/>
    <property type="match status" value="1"/>
</dbReference>
<dbReference type="Pfam" id="PF00893">
    <property type="entry name" value="Multi_Drug_Res"/>
    <property type="match status" value="1"/>
</dbReference>
<dbReference type="SUPFAM" id="SSF103481">
    <property type="entry name" value="Multidrug resistance efflux transporter EmrE"/>
    <property type="match status" value="1"/>
</dbReference>
<feature type="chain" id="PRO_0000429452" description="Nicotine metabolites export pump subunit NepA">
    <location>
        <begin position="1"/>
        <end position="116"/>
    </location>
</feature>
<feature type="transmembrane region" description="Helical" evidence="1">
    <location>
        <begin position="10"/>
        <end position="30"/>
    </location>
</feature>
<feature type="transmembrane region" description="Helical" evidence="1">
    <location>
        <begin position="42"/>
        <end position="62"/>
    </location>
</feature>
<feature type="transmembrane region" description="Helical" evidence="1">
    <location>
        <begin position="67"/>
        <end position="87"/>
    </location>
</feature>
<feature type="transmembrane region" description="Helical" evidence="1">
    <location>
        <begin position="92"/>
        <end position="112"/>
    </location>
</feature>
<evidence type="ECO:0000255" key="1"/>
<evidence type="ECO:0000269" key="2">
    <source>
    </source>
</evidence>
<evidence type="ECO:0000305" key="3"/>
<proteinExistence type="evidence at protein level"/>
<comment type="function">
    <text evidence="2">Component of an efflux pump responsible for the transport of nicotine breakdown products, in particular methylamine, out of the cell. This pump apparently serves as a metabolic valve for nicotine catabolites and may protect the bacteria from the potentially toxic side effects of these compounds.</text>
</comment>
<comment type="subunit">
    <text evidence="2">The efflux pump is composed of NepA and NepB.</text>
</comment>
<comment type="subcellular location">
    <subcellularLocation>
        <location evidence="3">Cell membrane</location>
        <topology evidence="3">Multi-pass membrane protein</topology>
    </subcellularLocation>
</comment>
<comment type="induction">
    <text evidence="2">Is transcribed only in the presence of nicotine under the control of the transcriptional activator PmfR. Forms part of an operon with nepB, folD, mabO and purU.</text>
</comment>
<comment type="similarity">
    <text evidence="3">Belongs to the drug/metabolite transporter (DMT) superfamily. Small multidrug resistance (SMR) (TC 2.A.7.1) family. NepA/NepB subfamily.</text>
</comment>